<reference key="1">
    <citation type="submission" date="2006-06" db="EMBL/GenBank/DDBJ databases">
        <title>Complete sequence of chromosome of Mesorhizobium sp. BNC1.</title>
        <authorList>
            <consortium name="US DOE Joint Genome Institute"/>
            <person name="Copeland A."/>
            <person name="Lucas S."/>
            <person name="Lapidus A."/>
            <person name="Barry K."/>
            <person name="Detter J.C."/>
            <person name="Glavina del Rio T."/>
            <person name="Hammon N."/>
            <person name="Israni S."/>
            <person name="Dalin E."/>
            <person name="Tice H."/>
            <person name="Pitluck S."/>
            <person name="Chertkov O."/>
            <person name="Brettin T."/>
            <person name="Bruce D."/>
            <person name="Han C."/>
            <person name="Tapia R."/>
            <person name="Gilna P."/>
            <person name="Schmutz J."/>
            <person name="Larimer F."/>
            <person name="Land M."/>
            <person name="Hauser L."/>
            <person name="Kyrpides N."/>
            <person name="Mikhailova N."/>
            <person name="Richardson P."/>
        </authorList>
    </citation>
    <scope>NUCLEOTIDE SEQUENCE [LARGE SCALE GENOMIC DNA]</scope>
    <source>
        <strain>BNC1</strain>
    </source>
</reference>
<protein>
    <recommendedName>
        <fullName evidence="1">Sulfate adenylyltransferase subunit 2</fullName>
        <ecNumber evidence="1">2.7.7.4</ecNumber>
    </recommendedName>
    <alternativeName>
        <fullName evidence="1">ATP-sulfurylase small subunit</fullName>
    </alternativeName>
    <alternativeName>
        <fullName evidence="1">Sulfate adenylate transferase</fullName>
        <shortName evidence="1">SAT</shortName>
    </alternativeName>
</protein>
<proteinExistence type="inferred from homology"/>
<organism>
    <name type="scientific">Chelativorans sp. (strain BNC1)</name>
    <dbReference type="NCBI Taxonomy" id="266779"/>
    <lineage>
        <taxon>Bacteria</taxon>
        <taxon>Pseudomonadati</taxon>
        <taxon>Pseudomonadota</taxon>
        <taxon>Alphaproteobacteria</taxon>
        <taxon>Hyphomicrobiales</taxon>
        <taxon>Phyllobacteriaceae</taxon>
        <taxon>Chelativorans</taxon>
    </lineage>
</organism>
<accession>Q11K42</accession>
<feature type="chain" id="PRO_1000008963" description="Sulfate adenylyltransferase subunit 2">
    <location>
        <begin position="1"/>
        <end position="301"/>
    </location>
</feature>
<feature type="region of interest" description="Disordered" evidence="2">
    <location>
        <begin position="282"/>
        <end position="301"/>
    </location>
</feature>
<evidence type="ECO:0000255" key="1">
    <source>
        <dbReference type="HAMAP-Rule" id="MF_00064"/>
    </source>
</evidence>
<evidence type="ECO:0000256" key="2">
    <source>
        <dbReference type="SAM" id="MobiDB-lite"/>
    </source>
</evidence>
<keyword id="KW-0067">ATP-binding</keyword>
<keyword id="KW-0547">Nucleotide-binding</keyword>
<keyword id="KW-0548">Nucleotidyltransferase</keyword>
<keyword id="KW-0808">Transferase</keyword>
<comment type="function">
    <text evidence="1">With CysN forms the ATP sulfurylase (ATPS) that catalyzes the adenylation of sulfate producing adenosine 5'-phosphosulfate (APS) and diphosphate, the first enzymatic step in sulfur assimilation pathway. APS synthesis involves the formation of a high-energy phosphoric-sulfuric acid anhydride bond driven by GTP hydrolysis by CysN coupled to ATP hydrolysis by CysD.</text>
</comment>
<comment type="catalytic activity">
    <reaction evidence="1">
        <text>sulfate + ATP + H(+) = adenosine 5'-phosphosulfate + diphosphate</text>
        <dbReference type="Rhea" id="RHEA:18133"/>
        <dbReference type="ChEBI" id="CHEBI:15378"/>
        <dbReference type="ChEBI" id="CHEBI:16189"/>
        <dbReference type="ChEBI" id="CHEBI:30616"/>
        <dbReference type="ChEBI" id="CHEBI:33019"/>
        <dbReference type="ChEBI" id="CHEBI:58243"/>
        <dbReference type="EC" id="2.7.7.4"/>
    </reaction>
</comment>
<comment type="pathway">
    <text evidence="1">Sulfur metabolism; hydrogen sulfide biosynthesis; sulfite from sulfate: step 1/3.</text>
</comment>
<comment type="subunit">
    <text evidence="1">Heterodimer composed of CysD, the smaller subunit, and CysN.</text>
</comment>
<comment type="similarity">
    <text evidence="1">Belongs to the PAPS reductase family. CysD subfamily.</text>
</comment>
<name>CYSD_CHESB</name>
<gene>
    <name evidence="1" type="primary">cysD</name>
    <name type="ordered locus">Meso_0833</name>
</gene>
<dbReference type="EC" id="2.7.7.4" evidence="1"/>
<dbReference type="EMBL" id="CP000390">
    <property type="protein sequence ID" value="ABG62233.1"/>
    <property type="molecule type" value="Genomic_DNA"/>
</dbReference>
<dbReference type="SMR" id="Q11K42"/>
<dbReference type="STRING" id="266779.Meso_0833"/>
<dbReference type="KEGG" id="mes:Meso_0833"/>
<dbReference type="eggNOG" id="COG0175">
    <property type="taxonomic scope" value="Bacteria"/>
</dbReference>
<dbReference type="HOGENOM" id="CLU_043026_0_0_5"/>
<dbReference type="OrthoDB" id="9772604at2"/>
<dbReference type="UniPathway" id="UPA00140">
    <property type="reaction ID" value="UER00204"/>
</dbReference>
<dbReference type="GO" id="GO:0005524">
    <property type="term" value="F:ATP binding"/>
    <property type="evidence" value="ECO:0007669"/>
    <property type="project" value="UniProtKB-KW"/>
</dbReference>
<dbReference type="GO" id="GO:0004781">
    <property type="term" value="F:sulfate adenylyltransferase (ATP) activity"/>
    <property type="evidence" value="ECO:0007669"/>
    <property type="project" value="UniProtKB-UniRule"/>
</dbReference>
<dbReference type="GO" id="GO:0070814">
    <property type="term" value="P:hydrogen sulfide biosynthetic process"/>
    <property type="evidence" value="ECO:0007669"/>
    <property type="project" value="UniProtKB-UniRule"/>
</dbReference>
<dbReference type="GO" id="GO:0000103">
    <property type="term" value="P:sulfate assimilation"/>
    <property type="evidence" value="ECO:0007669"/>
    <property type="project" value="UniProtKB-UniRule"/>
</dbReference>
<dbReference type="CDD" id="cd23946">
    <property type="entry name" value="Sulfate_adenylyltransferase_2"/>
    <property type="match status" value="1"/>
</dbReference>
<dbReference type="FunFam" id="3.40.50.620:FF:000002">
    <property type="entry name" value="Sulfate adenylyltransferase subunit 2"/>
    <property type="match status" value="1"/>
</dbReference>
<dbReference type="Gene3D" id="3.40.50.620">
    <property type="entry name" value="HUPs"/>
    <property type="match status" value="1"/>
</dbReference>
<dbReference type="HAMAP" id="MF_00064">
    <property type="entry name" value="Sulf_adenylyltr_sub2"/>
    <property type="match status" value="1"/>
</dbReference>
<dbReference type="InterPro" id="IPR002500">
    <property type="entry name" value="PAPS_reduct_dom"/>
</dbReference>
<dbReference type="InterPro" id="IPR014729">
    <property type="entry name" value="Rossmann-like_a/b/a_fold"/>
</dbReference>
<dbReference type="InterPro" id="IPR011784">
    <property type="entry name" value="SO4_adenylTrfase_ssu"/>
</dbReference>
<dbReference type="InterPro" id="IPR050128">
    <property type="entry name" value="Sulfate_adenylyltrnsfr_sub2"/>
</dbReference>
<dbReference type="NCBIfam" id="TIGR02039">
    <property type="entry name" value="CysD"/>
    <property type="match status" value="1"/>
</dbReference>
<dbReference type="NCBIfam" id="NF003587">
    <property type="entry name" value="PRK05253.1"/>
    <property type="match status" value="1"/>
</dbReference>
<dbReference type="NCBIfam" id="NF009214">
    <property type="entry name" value="PRK12563.1"/>
    <property type="match status" value="1"/>
</dbReference>
<dbReference type="PANTHER" id="PTHR43196">
    <property type="entry name" value="SULFATE ADENYLYLTRANSFERASE SUBUNIT 2"/>
    <property type="match status" value="1"/>
</dbReference>
<dbReference type="PANTHER" id="PTHR43196:SF1">
    <property type="entry name" value="SULFATE ADENYLYLTRANSFERASE SUBUNIT 2"/>
    <property type="match status" value="1"/>
</dbReference>
<dbReference type="Pfam" id="PF01507">
    <property type="entry name" value="PAPS_reduct"/>
    <property type="match status" value="1"/>
</dbReference>
<dbReference type="PIRSF" id="PIRSF002936">
    <property type="entry name" value="CysDAde_trans"/>
    <property type="match status" value="1"/>
</dbReference>
<dbReference type="SUPFAM" id="SSF52402">
    <property type="entry name" value="Adenine nucleotide alpha hydrolases-like"/>
    <property type="match status" value="1"/>
</dbReference>
<sequence>MTANLTHLQRLEAESIHIMRGVAANFSKPVMLYSIGKDSSVLLHLAMKAFYPAKPPFPFLHVDTTWKFREMIEFRDRMAAELGFDLLVHINEEGVRDGINPFDHGSNVHTHIMKTVALRQALDKYGFDAAFGGARRDEEKSRAKERVFSFRTASHTWDPKNQRPEMWKIYNTRVAQGESIRVFPLSNWTELDIWQYILQEGIPIVPLYFAKKRPVVNRGGMTIMVDDDRMKLLPGETVEERMVRFRTLGCYPLTGAIDSCAATLEDIVSEMLTARTSERQGRLIDRDEAGSMEKKKREGYF</sequence>